<name>DER_RICCK</name>
<evidence type="ECO:0000255" key="1">
    <source>
        <dbReference type="HAMAP-Rule" id="MF_00195"/>
    </source>
</evidence>
<proteinExistence type="inferred from homology"/>
<reference key="1">
    <citation type="submission" date="2007-09" db="EMBL/GenBank/DDBJ databases">
        <title>Complete genome sequence of Rickettsia canadensis.</title>
        <authorList>
            <person name="Madan A."/>
            <person name="Fahey J."/>
            <person name="Helton E."/>
            <person name="Ketteman M."/>
            <person name="Madan A."/>
            <person name="Rodrigues S."/>
            <person name="Sanchez A."/>
            <person name="Whiting M."/>
            <person name="Dasch G."/>
            <person name="Eremeeva M."/>
        </authorList>
    </citation>
    <scope>NUCLEOTIDE SEQUENCE [LARGE SCALE GENOMIC DNA]</scope>
    <source>
        <strain>McKiel</strain>
    </source>
</reference>
<keyword id="KW-0342">GTP-binding</keyword>
<keyword id="KW-0547">Nucleotide-binding</keyword>
<keyword id="KW-0677">Repeat</keyword>
<keyword id="KW-0690">Ribosome biogenesis</keyword>
<feature type="chain" id="PRO_1000011725" description="GTPase Der">
    <location>
        <begin position="1"/>
        <end position="447"/>
    </location>
</feature>
<feature type="domain" description="EngA-type G 1">
    <location>
        <begin position="4"/>
        <end position="165"/>
    </location>
</feature>
<feature type="domain" description="EngA-type G 2">
    <location>
        <begin position="180"/>
        <end position="357"/>
    </location>
</feature>
<feature type="domain" description="KH-like" evidence="1">
    <location>
        <begin position="358"/>
        <end position="443"/>
    </location>
</feature>
<feature type="binding site" evidence="1">
    <location>
        <begin position="10"/>
        <end position="17"/>
    </location>
    <ligand>
        <name>GTP</name>
        <dbReference type="ChEBI" id="CHEBI:37565"/>
        <label>1</label>
    </ligand>
</feature>
<feature type="binding site" evidence="1">
    <location>
        <begin position="57"/>
        <end position="61"/>
    </location>
    <ligand>
        <name>GTP</name>
        <dbReference type="ChEBI" id="CHEBI:37565"/>
        <label>1</label>
    </ligand>
</feature>
<feature type="binding site" evidence="1">
    <location>
        <begin position="119"/>
        <end position="122"/>
    </location>
    <ligand>
        <name>GTP</name>
        <dbReference type="ChEBI" id="CHEBI:37565"/>
        <label>1</label>
    </ligand>
</feature>
<feature type="binding site" evidence="1">
    <location>
        <begin position="186"/>
        <end position="193"/>
    </location>
    <ligand>
        <name>GTP</name>
        <dbReference type="ChEBI" id="CHEBI:37565"/>
        <label>2</label>
    </ligand>
</feature>
<feature type="binding site" evidence="1">
    <location>
        <begin position="233"/>
        <end position="237"/>
    </location>
    <ligand>
        <name>GTP</name>
        <dbReference type="ChEBI" id="CHEBI:37565"/>
        <label>2</label>
    </ligand>
</feature>
<feature type="binding site" evidence="1">
    <location>
        <begin position="298"/>
        <end position="301"/>
    </location>
    <ligand>
        <name>GTP</name>
        <dbReference type="ChEBI" id="CHEBI:37565"/>
        <label>2</label>
    </ligand>
</feature>
<sequence>MTKQIIALVGRPNVGKSTLFNRLSIRKKAIVHNLPGVTRDRKYTDGKIGSCEFLLIDTPGLEENPNSMSVRLMEQTTKAILEADLICFMVDCRSGILPDDKLLSSFIRKYNKPAILVVNKCEKAFDFDKEYYQLGFDSMVAISAEHGTGLIDLYDEIIAKLPKEKSIETNIADPVKGDCVQIVISGRPNAGKSTFINALINDERLLTGPEAGITRESIEIDWQYKNNHIKLIDTAGLRKKSTITESLDKLSASDAINSIKFANTVILIIDALSPLKQQDLNIASYVANEGRSIVIVVNKWDLVKESEKEAFQEEFYYQINTHLPQIKGVSVLFISAINKQNIEQVLDACLTIYKNWNKKITTSKLNEWLNFTTEAHPLPLQKGGKRVRIKYMTQIKTRPPTFKLFSNNPEKITNSYTRYLVNNMREAFDMPGIPIRFAYVKTKNPYV</sequence>
<accession>A8EZN9</accession>
<gene>
    <name evidence="1" type="primary">der</name>
    <name type="synonym">engA</name>
    <name type="ordered locus">A1E_04485</name>
</gene>
<dbReference type="EMBL" id="CP000409">
    <property type="protein sequence ID" value="ABV73822.1"/>
    <property type="molecule type" value="Genomic_DNA"/>
</dbReference>
<dbReference type="RefSeq" id="WP_012149017.1">
    <property type="nucleotide sequence ID" value="NC_009879.1"/>
</dbReference>
<dbReference type="SMR" id="A8EZN9"/>
<dbReference type="STRING" id="293613.A1E_04485"/>
<dbReference type="KEGG" id="rcm:A1E_04485"/>
<dbReference type="eggNOG" id="COG1160">
    <property type="taxonomic scope" value="Bacteria"/>
</dbReference>
<dbReference type="HOGENOM" id="CLU_016077_5_0_5"/>
<dbReference type="Proteomes" id="UP000007056">
    <property type="component" value="Chromosome"/>
</dbReference>
<dbReference type="GO" id="GO:0005525">
    <property type="term" value="F:GTP binding"/>
    <property type="evidence" value="ECO:0007669"/>
    <property type="project" value="UniProtKB-UniRule"/>
</dbReference>
<dbReference type="GO" id="GO:0042254">
    <property type="term" value="P:ribosome biogenesis"/>
    <property type="evidence" value="ECO:0007669"/>
    <property type="project" value="UniProtKB-KW"/>
</dbReference>
<dbReference type="CDD" id="cd01894">
    <property type="entry name" value="EngA1"/>
    <property type="match status" value="1"/>
</dbReference>
<dbReference type="CDD" id="cd01895">
    <property type="entry name" value="EngA2"/>
    <property type="match status" value="1"/>
</dbReference>
<dbReference type="FunFam" id="3.30.300.20:FF:000004">
    <property type="entry name" value="GTPase Der"/>
    <property type="match status" value="1"/>
</dbReference>
<dbReference type="Gene3D" id="3.30.300.20">
    <property type="match status" value="1"/>
</dbReference>
<dbReference type="Gene3D" id="3.40.50.300">
    <property type="entry name" value="P-loop containing nucleotide triphosphate hydrolases"/>
    <property type="match status" value="2"/>
</dbReference>
<dbReference type="HAMAP" id="MF_00195">
    <property type="entry name" value="GTPase_Der"/>
    <property type="match status" value="1"/>
</dbReference>
<dbReference type="InterPro" id="IPR031166">
    <property type="entry name" value="G_ENGA"/>
</dbReference>
<dbReference type="InterPro" id="IPR006073">
    <property type="entry name" value="GTP-bd"/>
</dbReference>
<dbReference type="InterPro" id="IPR016484">
    <property type="entry name" value="GTPase_Der"/>
</dbReference>
<dbReference type="InterPro" id="IPR032859">
    <property type="entry name" value="KH_dom-like"/>
</dbReference>
<dbReference type="InterPro" id="IPR015946">
    <property type="entry name" value="KH_dom-like_a/b"/>
</dbReference>
<dbReference type="InterPro" id="IPR027417">
    <property type="entry name" value="P-loop_NTPase"/>
</dbReference>
<dbReference type="InterPro" id="IPR005225">
    <property type="entry name" value="Small_GTP-bd"/>
</dbReference>
<dbReference type="NCBIfam" id="TIGR03594">
    <property type="entry name" value="GTPase_EngA"/>
    <property type="match status" value="1"/>
</dbReference>
<dbReference type="NCBIfam" id="TIGR00231">
    <property type="entry name" value="small_GTP"/>
    <property type="match status" value="2"/>
</dbReference>
<dbReference type="PANTHER" id="PTHR43834">
    <property type="entry name" value="GTPASE DER"/>
    <property type="match status" value="1"/>
</dbReference>
<dbReference type="PANTHER" id="PTHR43834:SF6">
    <property type="entry name" value="GTPASE DER"/>
    <property type="match status" value="1"/>
</dbReference>
<dbReference type="Pfam" id="PF14714">
    <property type="entry name" value="KH_dom-like"/>
    <property type="match status" value="1"/>
</dbReference>
<dbReference type="Pfam" id="PF01926">
    <property type="entry name" value="MMR_HSR1"/>
    <property type="match status" value="2"/>
</dbReference>
<dbReference type="PIRSF" id="PIRSF006485">
    <property type="entry name" value="GTP-binding_EngA"/>
    <property type="match status" value="1"/>
</dbReference>
<dbReference type="PRINTS" id="PR00326">
    <property type="entry name" value="GTP1OBG"/>
</dbReference>
<dbReference type="SUPFAM" id="SSF52540">
    <property type="entry name" value="P-loop containing nucleoside triphosphate hydrolases"/>
    <property type="match status" value="2"/>
</dbReference>
<dbReference type="PROSITE" id="PS51712">
    <property type="entry name" value="G_ENGA"/>
    <property type="match status" value="2"/>
</dbReference>
<comment type="function">
    <text evidence="1">GTPase that plays an essential role in the late steps of ribosome biogenesis.</text>
</comment>
<comment type="subunit">
    <text evidence="1">Associates with the 50S ribosomal subunit.</text>
</comment>
<comment type="similarity">
    <text evidence="1">Belongs to the TRAFAC class TrmE-Era-EngA-EngB-Septin-like GTPase superfamily. EngA (Der) GTPase family.</text>
</comment>
<organism>
    <name type="scientific">Rickettsia canadensis (strain McKiel)</name>
    <dbReference type="NCBI Taxonomy" id="293613"/>
    <lineage>
        <taxon>Bacteria</taxon>
        <taxon>Pseudomonadati</taxon>
        <taxon>Pseudomonadota</taxon>
        <taxon>Alphaproteobacteria</taxon>
        <taxon>Rickettsiales</taxon>
        <taxon>Rickettsiaceae</taxon>
        <taxon>Rickettsieae</taxon>
        <taxon>Rickettsia</taxon>
        <taxon>belli group</taxon>
    </lineage>
</organism>
<protein>
    <recommendedName>
        <fullName evidence="1">GTPase Der</fullName>
    </recommendedName>
    <alternativeName>
        <fullName evidence="1">GTP-binding protein EngA</fullName>
    </alternativeName>
</protein>